<reference key="1">
    <citation type="journal article" date="1998" name="Biochim. Biophys. Acta">
        <title>Genomic structure and expression of murine poly(A) binding protein II gene.</title>
        <authorList>
            <person name="Lee Y.J."/>
            <person name="Lee J."/>
            <person name="Yang I.C."/>
            <person name="Hahn Y."/>
            <person name="Lee Y."/>
            <person name="Chung J.H."/>
        </authorList>
    </citation>
    <scope>NUCLEOTIDE SEQUENCE [GENOMIC DNA]</scope>
    <scope>TISSUE SPECIFICITY</scope>
    <source>
        <strain>129</strain>
    </source>
</reference>
<reference key="2">
    <citation type="journal article" date="2005" name="Science">
        <title>The transcriptional landscape of the mammalian genome.</title>
        <authorList>
            <person name="Carninci P."/>
            <person name="Kasukawa T."/>
            <person name="Katayama S."/>
            <person name="Gough J."/>
            <person name="Frith M.C."/>
            <person name="Maeda N."/>
            <person name="Oyama R."/>
            <person name="Ravasi T."/>
            <person name="Lenhard B."/>
            <person name="Wells C."/>
            <person name="Kodzius R."/>
            <person name="Shimokawa K."/>
            <person name="Bajic V.B."/>
            <person name="Brenner S.E."/>
            <person name="Batalov S."/>
            <person name="Forrest A.R."/>
            <person name="Zavolan M."/>
            <person name="Davis M.J."/>
            <person name="Wilming L.G."/>
            <person name="Aidinis V."/>
            <person name="Allen J.E."/>
            <person name="Ambesi-Impiombato A."/>
            <person name="Apweiler R."/>
            <person name="Aturaliya R.N."/>
            <person name="Bailey T.L."/>
            <person name="Bansal M."/>
            <person name="Baxter L."/>
            <person name="Beisel K.W."/>
            <person name="Bersano T."/>
            <person name="Bono H."/>
            <person name="Chalk A.M."/>
            <person name="Chiu K.P."/>
            <person name="Choudhary V."/>
            <person name="Christoffels A."/>
            <person name="Clutterbuck D.R."/>
            <person name="Crowe M.L."/>
            <person name="Dalla E."/>
            <person name="Dalrymple B.P."/>
            <person name="de Bono B."/>
            <person name="Della Gatta G."/>
            <person name="di Bernardo D."/>
            <person name="Down T."/>
            <person name="Engstrom P."/>
            <person name="Fagiolini M."/>
            <person name="Faulkner G."/>
            <person name="Fletcher C.F."/>
            <person name="Fukushima T."/>
            <person name="Furuno M."/>
            <person name="Futaki S."/>
            <person name="Gariboldi M."/>
            <person name="Georgii-Hemming P."/>
            <person name="Gingeras T.R."/>
            <person name="Gojobori T."/>
            <person name="Green R.E."/>
            <person name="Gustincich S."/>
            <person name="Harbers M."/>
            <person name="Hayashi Y."/>
            <person name="Hensch T.K."/>
            <person name="Hirokawa N."/>
            <person name="Hill D."/>
            <person name="Huminiecki L."/>
            <person name="Iacono M."/>
            <person name="Ikeo K."/>
            <person name="Iwama A."/>
            <person name="Ishikawa T."/>
            <person name="Jakt M."/>
            <person name="Kanapin A."/>
            <person name="Katoh M."/>
            <person name="Kawasawa Y."/>
            <person name="Kelso J."/>
            <person name="Kitamura H."/>
            <person name="Kitano H."/>
            <person name="Kollias G."/>
            <person name="Krishnan S.P."/>
            <person name="Kruger A."/>
            <person name="Kummerfeld S.K."/>
            <person name="Kurochkin I.V."/>
            <person name="Lareau L.F."/>
            <person name="Lazarevic D."/>
            <person name="Lipovich L."/>
            <person name="Liu J."/>
            <person name="Liuni S."/>
            <person name="McWilliam S."/>
            <person name="Madan Babu M."/>
            <person name="Madera M."/>
            <person name="Marchionni L."/>
            <person name="Matsuda H."/>
            <person name="Matsuzawa S."/>
            <person name="Miki H."/>
            <person name="Mignone F."/>
            <person name="Miyake S."/>
            <person name="Morris K."/>
            <person name="Mottagui-Tabar S."/>
            <person name="Mulder N."/>
            <person name="Nakano N."/>
            <person name="Nakauchi H."/>
            <person name="Ng P."/>
            <person name="Nilsson R."/>
            <person name="Nishiguchi S."/>
            <person name="Nishikawa S."/>
            <person name="Nori F."/>
            <person name="Ohara O."/>
            <person name="Okazaki Y."/>
            <person name="Orlando V."/>
            <person name="Pang K.C."/>
            <person name="Pavan W.J."/>
            <person name="Pavesi G."/>
            <person name="Pesole G."/>
            <person name="Petrovsky N."/>
            <person name="Piazza S."/>
            <person name="Reed J."/>
            <person name="Reid J.F."/>
            <person name="Ring B.Z."/>
            <person name="Ringwald M."/>
            <person name="Rost B."/>
            <person name="Ruan Y."/>
            <person name="Salzberg S.L."/>
            <person name="Sandelin A."/>
            <person name="Schneider C."/>
            <person name="Schoenbach C."/>
            <person name="Sekiguchi K."/>
            <person name="Semple C.A."/>
            <person name="Seno S."/>
            <person name="Sessa L."/>
            <person name="Sheng Y."/>
            <person name="Shibata Y."/>
            <person name="Shimada H."/>
            <person name="Shimada K."/>
            <person name="Silva D."/>
            <person name="Sinclair B."/>
            <person name="Sperling S."/>
            <person name="Stupka E."/>
            <person name="Sugiura K."/>
            <person name="Sultana R."/>
            <person name="Takenaka Y."/>
            <person name="Taki K."/>
            <person name="Tammoja K."/>
            <person name="Tan S.L."/>
            <person name="Tang S."/>
            <person name="Taylor M.S."/>
            <person name="Tegner J."/>
            <person name="Teichmann S.A."/>
            <person name="Ueda H.R."/>
            <person name="van Nimwegen E."/>
            <person name="Verardo R."/>
            <person name="Wei C.L."/>
            <person name="Yagi K."/>
            <person name="Yamanishi H."/>
            <person name="Zabarovsky E."/>
            <person name="Zhu S."/>
            <person name="Zimmer A."/>
            <person name="Hide W."/>
            <person name="Bult C."/>
            <person name="Grimmond S.M."/>
            <person name="Teasdale R.D."/>
            <person name="Liu E.T."/>
            <person name="Brusic V."/>
            <person name="Quackenbush J."/>
            <person name="Wahlestedt C."/>
            <person name="Mattick J.S."/>
            <person name="Hume D.A."/>
            <person name="Kai C."/>
            <person name="Sasaki D."/>
            <person name="Tomaru Y."/>
            <person name="Fukuda S."/>
            <person name="Kanamori-Katayama M."/>
            <person name="Suzuki M."/>
            <person name="Aoki J."/>
            <person name="Arakawa T."/>
            <person name="Iida J."/>
            <person name="Imamura K."/>
            <person name="Itoh M."/>
            <person name="Kato T."/>
            <person name="Kawaji H."/>
            <person name="Kawagashira N."/>
            <person name="Kawashima T."/>
            <person name="Kojima M."/>
            <person name="Kondo S."/>
            <person name="Konno H."/>
            <person name="Nakano K."/>
            <person name="Ninomiya N."/>
            <person name="Nishio T."/>
            <person name="Okada M."/>
            <person name="Plessy C."/>
            <person name="Shibata K."/>
            <person name="Shiraki T."/>
            <person name="Suzuki S."/>
            <person name="Tagami M."/>
            <person name="Waki K."/>
            <person name="Watahiki A."/>
            <person name="Okamura-Oho Y."/>
            <person name="Suzuki H."/>
            <person name="Kawai J."/>
            <person name="Hayashizaki Y."/>
        </authorList>
    </citation>
    <scope>NUCLEOTIDE SEQUENCE [LARGE SCALE MRNA] (ISOFORM 2)</scope>
    <source>
        <strain>C57BL/6J</strain>
        <tissue>Olfactory bulb</tissue>
    </source>
</reference>
<reference key="3">
    <citation type="journal article" date="2004" name="Genome Res.">
        <title>The status, quality, and expansion of the NIH full-length cDNA project: the Mammalian Gene Collection (MGC).</title>
        <authorList>
            <consortium name="The MGC Project Team"/>
        </authorList>
    </citation>
    <scope>NUCLEOTIDE SEQUENCE [LARGE SCALE MRNA] (ISOFORM 1)</scope>
    <source>
        <strain>FVB/N</strain>
        <tissue>Colon</tissue>
    </source>
</reference>
<reference key="4">
    <citation type="journal article" date="2010" name="Cell">
        <title>A tissue-specific atlas of mouse protein phosphorylation and expression.</title>
        <authorList>
            <person name="Huttlin E.L."/>
            <person name="Jedrychowski M.P."/>
            <person name="Elias J.E."/>
            <person name="Goswami T."/>
            <person name="Rad R."/>
            <person name="Beausoleil S.A."/>
            <person name="Villen J."/>
            <person name="Haas W."/>
            <person name="Sowa M.E."/>
            <person name="Gygi S.P."/>
        </authorList>
    </citation>
    <scope>IDENTIFICATION BY MASS SPECTROMETRY [LARGE SCALE ANALYSIS]</scope>
    <source>
        <tissue>Brain</tissue>
        <tissue>Lung</tissue>
        <tissue>Pancreas</tissue>
        <tissue>Spleen</tissue>
        <tissue>Testis</tissue>
    </source>
</reference>
<reference key="5">
    <citation type="journal article" date="2012" name="PLoS ONE">
        <title>Tristetraprolin inhibits poly(A)-tail synthesis in nuclear mRNA that contains AU-rich elements by interacting with poly(A)-binding protein nuclear 1.</title>
        <authorList>
            <person name="Su Y.L."/>
            <person name="Wang S.C."/>
            <person name="Chi ang P.Y."/>
            <person name="Lin N.Y."/>
            <person name="Shen Y.F."/>
            <person name="Chang G.D."/>
            <person name="Chang C.J."/>
        </authorList>
    </citation>
    <scope>INTERACTION WITH ZFP36</scope>
</reference>
<reference key="6">
    <citation type="journal article" date="2014" name="Mol. Cell. Proteomics">
        <title>Immunoaffinity enrichment and mass spectrometry analysis of protein methylation.</title>
        <authorList>
            <person name="Guo A."/>
            <person name="Gu H."/>
            <person name="Zhou J."/>
            <person name="Mulhern D."/>
            <person name="Wang Y."/>
            <person name="Lee K.A."/>
            <person name="Yang V."/>
            <person name="Aguiar M."/>
            <person name="Kornhauser J."/>
            <person name="Jia X."/>
            <person name="Ren J."/>
            <person name="Beausoleil S.A."/>
            <person name="Silva J.C."/>
            <person name="Vemulapalli V."/>
            <person name="Bedford M.T."/>
            <person name="Comb M.J."/>
        </authorList>
    </citation>
    <scope>METHYLATION [LARGE SCALE ANALYSIS] AT ARG-17</scope>
    <scope>IDENTIFICATION BY MASS SPECTROMETRY [LARGE SCALE ANALYSIS]</scope>
    <source>
        <tissue>Brain</tissue>
        <tissue>Embryo</tissue>
    </source>
</reference>
<dbReference type="EMBL" id="U93050">
    <property type="protein sequence ID" value="AAC00210.1"/>
    <property type="molecule type" value="Genomic_DNA"/>
</dbReference>
<dbReference type="EMBL" id="AK032172">
    <property type="protein sequence ID" value="BAC27741.1"/>
    <property type="molecule type" value="mRNA"/>
</dbReference>
<dbReference type="EMBL" id="BC055866">
    <property type="protein sequence ID" value="AAH55866.1"/>
    <property type="molecule type" value="mRNA"/>
</dbReference>
<dbReference type="CCDS" id="CCDS27104.1">
    <molecule id="Q8CCS6-1"/>
</dbReference>
<dbReference type="RefSeq" id="NP_062275.1">
    <molecule id="Q8CCS6-1"/>
    <property type="nucleotide sequence ID" value="NM_019402.2"/>
</dbReference>
<dbReference type="SMR" id="Q8CCS6"/>
<dbReference type="BioGRID" id="207596">
    <property type="interactions" value="26"/>
</dbReference>
<dbReference type="FunCoup" id="Q8CCS6">
    <property type="interactions" value="3621"/>
</dbReference>
<dbReference type="IntAct" id="Q8CCS6">
    <property type="interactions" value="3"/>
</dbReference>
<dbReference type="STRING" id="10090.ENSMUSP00000022808"/>
<dbReference type="GlyGen" id="Q8CCS6">
    <property type="glycosylation" value="1 site, 1 O-linked glycan (1 site)"/>
</dbReference>
<dbReference type="iPTMnet" id="Q8CCS6"/>
<dbReference type="PhosphoSitePlus" id="Q8CCS6"/>
<dbReference type="jPOST" id="Q8CCS6"/>
<dbReference type="PaxDb" id="10090-ENSMUSP00000022808"/>
<dbReference type="ProteomicsDB" id="287761">
    <molecule id="Q8CCS6-1"/>
</dbReference>
<dbReference type="ProteomicsDB" id="287762">
    <molecule id="Q8CCS6-2"/>
</dbReference>
<dbReference type="Pumba" id="Q8CCS6"/>
<dbReference type="DNASU" id="54196"/>
<dbReference type="Ensembl" id="ENSMUST00000022808.14">
    <molecule id="Q8CCS6-1"/>
    <property type="protein sequence ID" value="ENSMUSP00000022808.8"/>
    <property type="gene ID" value="ENSMUSG00000022194.16"/>
</dbReference>
<dbReference type="Ensembl" id="ENSMUST00000116476.9">
    <molecule id="Q8CCS6-2"/>
    <property type="protein sequence ID" value="ENSMUSP00000112177.3"/>
    <property type="gene ID" value="ENSMUSG00000022194.16"/>
</dbReference>
<dbReference type="GeneID" id="54196"/>
<dbReference type="KEGG" id="mmu:54196"/>
<dbReference type="UCSC" id="uc007txg.2">
    <molecule id="Q8CCS6-1"/>
    <property type="organism name" value="mouse"/>
</dbReference>
<dbReference type="UCSC" id="uc007txi.2">
    <molecule id="Q8CCS6-2"/>
    <property type="organism name" value="mouse"/>
</dbReference>
<dbReference type="AGR" id="MGI:1859158"/>
<dbReference type="CTD" id="8106"/>
<dbReference type="MGI" id="MGI:1859158">
    <property type="gene designation" value="Pabpn1"/>
</dbReference>
<dbReference type="VEuPathDB" id="HostDB:ENSMUSG00000022194"/>
<dbReference type="eggNOG" id="KOG4209">
    <property type="taxonomic scope" value="Eukaryota"/>
</dbReference>
<dbReference type="GeneTree" id="ENSGT00940000154606"/>
<dbReference type="HOGENOM" id="CLU_012062_23_1_1"/>
<dbReference type="InParanoid" id="Q8CCS6"/>
<dbReference type="OMA" id="PGHAERM"/>
<dbReference type="OrthoDB" id="89225at9989"/>
<dbReference type="PhylomeDB" id="Q8CCS6"/>
<dbReference type="TreeFam" id="TF105907"/>
<dbReference type="Reactome" id="R-MMU-72187">
    <property type="pathway name" value="mRNA 3'-end processing"/>
</dbReference>
<dbReference type="Reactome" id="R-MMU-72203">
    <property type="pathway name" value="Processing of Capped Intron-Containing Pre-mRNA"/>
</dbReference>
<dbReference type="Reactome" id="R-MMU-73856">
    <property type="pathway name" value="RNA Polymerase II Transcription Termination"/>
</dbReference>
<dbReference type="Reactome" id="R-MMU-77595">
    <property type="pathway name" value="Processing of Intronless Pre-mRNAs"/>
</dbReference>
<dbReference type="BioGRID-ORCS" id="54196">
    <property type="hits" value="33 hits in 83 CRISPR screens"/>
</dbReference>
<dbReference type="CD-CODE" id="AAD1380C">
    <property type="entry name" value="Nuclear poly(A) domains"/>
</dbReference>
<dbReference type="ChiTaRS" id="Pabpn1">
    <property type="organism name" value="mouse"/>
</dbReference>
<dbReference type="PRO" id="PR:Q8CCS6"/>
<dbReference type="Proteomes" id="UP000000589">
    <property type="component" value="Chromosome 14"/>
</dbReference>
<dbReference type="RNAct" id="Q8CCS6">
    <property type="molecule type" value="protein"/>
</dbReference>
<dbReference type="Bgee" id="ENSMUSG00000022194">
    <property type="expression patterns" value="Expressed in retinal neural layer and 270 other cell types or tissues"/>
</dbReference>
<dbReference type="ExpressionAtlas" id="Q8CCS6">
    <property type="expression patterns" value="baseline and differential"/>
</dbReference>
<dbReference type="GO" id="GO:0005829">
    <property type="term" value="C:cytosol"/>
    <property type="evidence" value="ECO:0000304"/>
    <property type="project" value="Reactome"/>
</dbReference>
<dbReference type="GO" id="GO:0042405">
    <property type="term" value="C:nuclear inclusion body"/>
    <property type="evidence" value="ECO:0000250"/>
    <property type="project" value="UniProtKB"/>
</dbReference>
<dbReference type="GO" id="GO:0016607">
    <property type="term" value="C:nuclear speck"/>
    <property type="evidence" value="ECO:0007669"/>
    <property type="project" value="UniProtKB-SubCell"/>
</dbReference>
<dbReference type="GO" id="GO:0005634">
    <property type="term" value="C:nucleus"/>
    <property type="evidence" value="ECO:0000314"/>
    <property type="project" value="UniProtKB"/>
</dbReference>
<dbReference type="GO" id="GO:1990904">
    <property type="term" value="C:ribonucleoprotein complex"/>
    <property type="evidence" value="ECO:0000314"/>
    <property type="project" value="UniProtKB"/>
</dbReference>
<dbReference type="GO" id="GO:0042802">
    <property type="term" value="F:identical protein binding"/>
    <property type="evidence" value="ECO:0000266"/>
    <property type="project" value="MGI"/>
</dbReference>
<dbReference type="GO" id="GO:0008143">
    <property type="term" value="F:poly(A) binding"/>
    <property type="evidence" value="ECO:0000304"/>
    <property type="project" value="MGI"/>
</dbReference>
<dbReference type="GO" id="GO:0070063">
    <property type="term" value="F:RNA polymerase binding"/>
    <property type="evidence" value="ECO:0000314"/>
    <property type="project" value="UniProtKB"/>
</dbReference>
<dbReference type="GO" id="GO:0071222">
    <property type="term" value="P:cellular response to lipopolysaccharide"/>
    <property type="evidence" value="ECO:0000315"/>
    <property type="project" value="UniProtKB"/>
</dbReference>
<dbReference type="GO" id="GO:0000165">
    <property type="term" value="P:MAPK cascade"/>
    <property type="evidence" value="ECO:0000315"/>
    <property type="project" value="UniProtKB"/>
</dbReference>
<dbReference type="GO" id="GO:0006397">
    <property type="term" value="P:mRNA processing"/>
    <property type="evidence" value="ECO:0007669"/>
    <property type="project" value="UniProtKB-KW"/>
</dbReference>
<dbReference type="GO" id="GO:1904247">
    <property type="term" value="P:positive regulation of polynucleotide adenylyltransferase activity"/>
    <property type="evidence" value="ECO:0000315"/>
    <property type="project" value="UniProtKB"/>
</dbReference>
<dbReference type="GO" id="GO:0031440">
    <property type="term" value="P:regulation of mRNA 3'-end processing"/>
    <property type="evidence" value="ECO:0000304"/>
    <property type="project" value="MGI"/>
</dbReference>
<dbReference type="CDD" id="cd12550">
    <property type="entry name" value="RRM_II_PABPN1"/>
    <property type="match status" value="1"/>
</dbReference>
<dbReference type="FunFam" id="3.30.70.330:FF:000311">
    <property type="entry name" value="polyadenylate-binding protein 2"/>
    <property type="match status" value="1"/>
</dbReference>
<dbReference type="Gene3D" id="3.30.70.330">
    <property type="match status" value="1"/>
</dbReference>
<dbReference type="InterPro" id="IPR012677">
    <property type="entry name" value="Nucleotide-bd_a/b_plait_sf"/>
</dbReference>
<dbReference type="InterPro" id="IPR035979">
    <property type="entry name" value="RBD_domain_sf"/>
</dbReference>
<dbReference type="InterPro" id="IPR000504">
    <property type="entry name" value="RRM_dom"/>
</dbReference>
<dbReference type="PANTHER" id="PTHR23236">
    <property type="entry name" value="EUKARYOTIC TRANSLATION INITIATION FACTOR 4B/4H"/>
    <property type="match status" value="1"/>
</dbReference>
<dbReference type="PANTHER" id="PTHR23236:SF16">
    <property type="entry name" value="POLYADENYLATE-BINDING PROTEIN 2"/>
    <property type="match status" value="1"/>
</dbReference>
<dbReference type="Pfam" id="PF00076">
    <property type="entry name" value="RRM_1"/>
    <property type="match status" value="1"/>
</dbReference>
<dbReference type="SMART" id="SM00360">
    <property type="entry name" value="RRM"/>
    <property type="match status" value="1"/>
</dbReference>
<dbReference type="SUPFAM" id="SSF54928">
    <property type="entry name" value="RNA-binding domain, RBD"/>
    <property type="match status" value="1"/>
</dbReference>
<dbReference type="PROSITE" id="PS50102">
    <property type="entry name" value="RRM"/>
    <property type="match status" value="1"/>
</dbReference>
<organism>
    <name type="scientific">Mus musculus</name>
    <name type="common">Mouse</name>
    <dbReference type="NCBI Taxonomy" id="10090"/>
    <lineage>
        <taxon>Eukaryota</taxon>
        <taxon>Metazoa</taxon>
        <taxon>Chordata</taxon>
        <taxon>Craniata</taxon>
        <taxon>Vertebrata</taxon>
        <taxon>Euteleostomi</taxon>
        <taxon>Mammalia</taxon>
        <taxon>Eutheria</taxon>
        <taxon>Euarchontoglires</taxon>
        <taxon>Glires</taxon>
        <taxon>Rodentia</taxon>
        <taxon>Myomorpha</taxon>
        <taxon>Muroidea</taxon>
        <taxon>Muridae</taxon>
        <taxon>Murinae</taxon>
        <taxon>Mus</taxon>
        <taxon>Mus</taxon>
    </lineage>
</organism>
<feature type="initiator methionine" description="Removed" evidence="2">
    <location>
        <position position="1"/>
    </location>
</feature>
<feature type="chain" id="PRO_0000081712" description="Polyadenylate-binding protein 2">
    <location>
        <begin position="2"/>
        <end position="302"/>
    </location>
</feature>
<feature type="domain" description="RRM" evidence="5">
    <location>
        <begin position="168"/>
        <end position="245"/>
    </location>
</feature>
<feature type="region of interest" description="Disordered" evidence="6">
    <location>
        <begin position="1"/>
        <end position="111"/>
    </location>
</feature>
<feature type="region of interest" description="Interaction with SKIP" evidence="1">
    <location>
        <begin position="2"/>
        <end position="141"/>
    </location>
</feature>
<feature type="region of interest" description="Stimulates PAPOLA" evidence="1">
    <location>
        <begin position="115"/>
        <end position="143"/>
    </location>
</feature>
<feature type="region of interest" description="Strong poly(A) affinity and self-association" evidence="1">
    <location>
        <begin position="255"/>
        <end position="302"/>
    </location>
</feature>
<feature type="region of interest" description="Interaction with PAPOLA" evidence="1">
    <location>
        <begin position="282"/>
        <end position="302"/>
    </location>
</feature>
<feature type="coiled-coil region" evidence="4">
    <location>
        <begin position="111"/>
        <end position="147"/>
    </location>
</feature>
<feature type="compositionally biased region" description="Low complexity" evidence="6">
    <location>
        <begin position="1"/>
        <end position="12"/>
    </location>
</feature>
<feature type="compositionally biased region" description="Gly residues" evidence="6">
    <location>
        <begin position="30"/>
        <end position="47"/>
    </location>
</feature>
<feature type="compositionally biased region" description="Acidic residues" evidence="6">
    <location>
        <begin position="51"/>
        <end position="68"/>
    </location>
</feature>
<feature type="compositionally biased region" description="Pro residues" evidence="6">
    <location>
        <begin position="73"/>
        <end position="83"/>
    </location>
</feature>
<feature type="modified residue" description="N-acetylalanine" evidence="2">
    <location>
        <position position="2"/>
    </location>
</feature>
<feature type="modified residue" description="Omega-N-methylarginine" evidence="11">
    <location>
        <position position="17"/>
    </location>
</feature>
<feature type="modified residue" description="Phosphoserine" evidence="3">
    <location>
        <position position="19"/>
    </location>
</feature>
<feature type="modified residue" description="Phosphoserine" evidence="3">
    <location>
        <position position="52"/>
    </location>
</feature>
<feature type="modified residue" description="Phosphoserine" evidence="3">
    <location>
        <position position="91"/>
    </location>
</feature>
<feature type="modified residue" description="Phosphoserine" evidence="3">
    <location>
        <position position="146"/>
    </location>
</feature>
<feature type="modified residue" description="Phosphoserine" evidence="3">
    <location>
        <position position="231"/>
    </location>
</feature>
<feature type="modified residue" description="Asymmetric dimethylarginine; alternate" evidence="2">
    <location>
        <position position="234"/>
    </location>
</feature>
<feature type="modified residue" description="Omega-N-methylarginine; alternate" evidence="2">
    <location>
        <position position="234"/>
    </location>
</feature>
<feature type="modified residue" description="Asymmetric dimethylarginine; alternate" evidence="2">
    <location>
        <position position="255"/>
    </location>
</feature>
<feature type="modified residue" description="Omega-N-methylarginine; alternate" evidence="3">
    <location>
        <position position="255"/>
    </location>
</feature>
<feature type="modified residue" description="Asymmetric dimethylarginine; alternate" evidence="2">
    <location>
        <position position="259"/>
    </location>
</feature>
<feature type="modified residue" description="Omega-N-methylarginine; alternate" evidence="3">
    <location>
        <position position="259"/>
    </location>
</feature>
<feature type="modified residue" description="Asymmetric dimethylarginine" evidence="2">
    <location>
        <position position="261"/>
    </location>
</feature>
<feature type="modified residue" description="Asymmetric dimethylarginine" evidence="2">
    <location>
        <position position="263"/>
    </location>
</feature>
<feature type="modified residue" description="Asymmetric dimethylarginine" evidence="2">
    <location>
        <position position="265"/>
    </location>
</feature>
<feature type="modified residue" description="Asymmetric dimethylarginine" evidence="2">
    <location>
        <position position="273"/>
    </location>
</feature>
<feature type="modified residue" description="Asymmetric dimethylarginine" evidence="2">
    <location>
        <position position="275"/>
    </location>
</feature>
<feature type="modified residue" description="Asymmetric dimethylarginine" evidence="2">
    <location>
        <position position="283"/>
    </location>
</feature>
<feature type="modified residue" description="Asymmetric dimethylarginine" evidence="2">
    <location>
        <position position="285"/>
    </location>
</feature>
<feature type="modified residue" description="Asymmetric dimethylarginine" evidence="2">
    <location>
        <position position="287"/>
    </location>
</feature>
<feature type="modified residue" description="Asymmetric dimethylarginine" evidence="2">
    <location>
        <position position="290"/>
    </location>
</feature>
<feature type="modified residue" description="Asymmetric dimethylarginine" evidence="2">
    <location>
        <position position="292"/>
    </location>
</feature>
<feature type="modified residue" description="Asymmetric dimethylarginine" evidence="2">
    <location>
        <position position="294"/>
    </location>
</feature>
<feature type="splice variant" id="VSP_009849" description="In isoform 2." evidence="9">
    <original>GR</original>
    <variation>SG</variation>
    <location>
        <begin position="291"/>
        <end position="292"/>
    </location>
</feature>
<feature type="splice variant" id="VSP_009850" description="In isoform 2." evidence="9">
    <location>
        <begin position="293"/>
        <end position="302"/>
    </location>
</feature>
<accession>Q8CCS6</accession>
<accession>O35935</accession>
<protein>
    <recommendedName>
        <fullName>Polyadenylate-binding protein 2</fullName>
        <shortName>PABP-2</shortName>
        <shortName>Poly(A)-binding protein 2</shortName>
    </recommendedName>
    <alternativeName>
        <fullName>Nuclear poly(A)-binding protein 1</fullName>
    </alternativeName>
    <alternativeName>
        <fullName>Poly(A)-binding protein II</fullName>
        <shortName>PABII</shortName>
    </alternativeName>
    <alternativeName>
        <fullName>Polyadenylate-binding nuclear protein 1</fullName>
    </alternativeName>
</protein>
<proteinExistence type="evidence at protein level"/>
<comment type="function">
    <text evidence="2 3">Involved in the 3'-end formation of mRNA precursors (pre-mRNA) by the addition of a poly(A) tail of 200-250 nt to the upstream cleavage product. Stimulates poly(A) polymerase (PAPOLA) conferring processivity on the poly(A) tail elongation reaction and also controls the poly(A) tail length. Increases the affinity of poly(A) polymerase for RNA. Is also present at various stages of mRNA metabolism including nucleocytoplasmic trafficking and nonsense-mediated decay (NMD) of mRNA. Cooperates with SKIP to synergistically activate E-box-mediated transcription through MYOD1 and may regulate the expression of muscle-specific genes. Binds to poly(A) and to poly(G) with high affinity. May protect the poly(A) tail from degradation. Subunit of the trimeric poly(A) tail exosome targeting (PAXT) complex, a complex that directs a subset of long and polyadenylated poly(A) RNAs for exosomal degradation. The RNA exosome is fundamental for the degradation of RNA in eukaryotic nuclei. Substrate targeting is facilitated by its cofactor MTREX, which links to RNA-binding protein adapters (By similarity).</text>
</comment>
<comment type="subunit">
    <text evidence="3 7">Monomer and homooligomer. Identified in a IGF2BP1-dependent mRNP granule complex containing untranslated mRNAs. Binds RNA as a monomer and oligomerizes when bound to poly(A). Interacts with PAPOLA, but only in presence of oligo(A) RNA. Interacts with NUDT21/CPSF5 and transportin. Associates in a ternary complex with CPSF4 and NS/NS1 and interaction with NS/NS1, blocks nuclear export of host cell mRNAs. Associates in a single complex with SKIP and MYOD1 and interacts with SKIP in differentiated myocytes. May interact with SETX (By similarity). Interacts (via RRM domain and C-terminal arginine-rich region) with ZFP36 (via hypophosphorylated form); this interaction occurs in the nucleus in a RNA-independent manner, decreases in presence of single-stranded poly(A) RNA-oligomer and in a p38-dependent-manner and may down-regulated RNA poly(A) polymerase activity (PubMed:22844456). Component of the poly(A) tail exosome targeting (PAXT) complex composed of PABPN1, ZFC3H1 and MTREX. Interacts with ZFC3H1 in a RNase-insensitive manner (By similarity). Interacts with FRG1 (By similarity). Interacts with ZC3H11A (By similarity).</text>
</comment>
<comment type="subcellular location">
    <subcellularLocation>
        <location evidence="3">Cytoplasm</location>
    </subcellularLocation>
    <subcellularLocation>
        <location evidence="3">Nucleus</location>
    </subcellularLocation>
    <subcellularLocation>
        <location evidence="3">Nucleus speckle</location>
    </subcellularLocation>
    <text evidence="2 3">Localized in cytoplasmic mRNP granules containing untranslated mRNAs. Shuttles between the nucleus and the cytoplasm but predominantly found in the nucleus. Its nuclear import may involve the nucleocytoplasmic transport receptor transportin and a RAN-GTP-sensitive import mechanism. It is exported to the cytoplasm by a carrier-mediated pathway that is independent of mRNA traffic. Nucleus; nuclear speckle (By similarity). Colocalizes with SKIP and poly(A) RNA in nuclear speckles (By similarity).</text>
</comment>
<comment type="alternative products">
    <event type="alternative splicing"/>
    <isoform>
        <id>Q8CCS6-1</id>
        <name>1</name>
        <sequence type="displayed"/>
    </isoform>
    <isoform>
        <id>Q8CCS6-2</id>
        <name>2</name>
        <sequence type="described" ref="VSP_009849 VSP_009850"/>
    </isoform>
</comment>
<comment type="tissue specificity">
    <text evidence="8">Ubiquitous.</text>
</comment>
<comment type="domain">
    <text evidence="1">The RRM domain is essential for specific adenine bases recognition in the poly(A) tail but not sufficient for poly(A) binding.</text>
</comment>
<comment type="PTM">
    <text evidence="1">Arginine dimethylation is asymmetric and involves PRMT1 and PRMT3. It does not influence the RNA binding properties (By similarity).</text>
</comment>
<comment type="miscellaneous">
    <molecule>Isoform 2</molecule>
    <text evidence="10">May be due to a competing donor splice site.</text>
</comment>
<name>PABP2_MOUSE</name>
<evidence type="ECO:0000250" key="1"/>
<evidence type="ECO:0000250" key="2">
    <source>
        <dbReference type="UniProtKB" id="Q28165"/>
    </source>
</evidence>
<evidence type="ECO:0000250" key="3">
    <source>
        <dbReference type="UniProtKB" id="Q86U42"/>
    </source>
</evidence>
<evidence type="ECO:0000255" key="4"/>
<evidence type="ECO:0000255" key="5">
    <source>
        <dbReference type="PROSITE-ProRule" id="PRU00176"/>
    </source>
</evidence>
<evidence type="ECO:0000256" key="6">
    <source>
        <dbReference type="SAM" id="MobiDB-lite"/>
    </source>
</evidence>
<evidence type="ECO:0000269" key="7">
    <source>
    </source>
</evidence>
<evidence type="ECO:0000269" key="8">
    <source>
    </source>
</evidence>
<evidence type="ECO:0000303" key="9">
    <source>
    </source>
</evidence>
<evidence type="ECO:0000305" key="10"/>
<evidence type="ECO:0007744" key="11">
    <source>
    </source>
</evidence>
<sequence>MAAAAAAAAAAGAAGGRGSGPGRRRHLVPGAGGEAGEGDPGGAGDYGNGLESEELEPGELLPEPEPEEEPPRPRAPPGAPGPGPGSGAPGSQEEEEEPGLVEADPGDGAIEDPELEAIKARVREMEEEAEKLKELQNEVEKQMNMSPPPGNAGPVIMSLEEKMEADARSIYVGNVDYGATAEELEAHFHGCGSVNRVTILCDKFSGHPKGFAYIEFSDKESVRTSLALDESLFRGRQIKVIPKRTNRPGISTTDRGFPRSRYRARTTNYNSSRSRFYSGFNSRPRGRIYRGRARATSWYSPY</sequence>
<gene>
    <name type="primary">Pabpn1</name>
    <name type="synonym">Pab2</name>
    <name type="synonym">Pabp2</name>
</gene>
<keyword id="KW-0007">Acetylation</keyword>
<keyword id="KW-0025">Alternative splicing</keyword>
<keyword id="KW-0175">Coiled coil</keyword>
<keyword id="KW-0963">Cytoplasm</keyword>
<keyword id="KW-0488">Methylation</keyword>
<keyword id="KW-0507">mRNA processing</keyword>
<keyword id="KW-0539">Nucleus</keyword>
<keyword id="KW-0597">Phosphoprotein</keyword>
<keyword id="KW-1185">Reference proteome</keyword>
<keyword id="KW-0694">RNA-binding</keyword>